<evidence type="ECO:0000250" key="1"/>
<evidence type="ECO:0000255" key="2"/>
<evidence type="ECO:0000269" key="3">
    <source>
    </source>
</evidence>
<evidence type="ECO:0000269" key="4">
    <source>
    </source>
</evidence>
<evidence type="ECO:0000269" key="5">
    <source>
    </source>
</evidence>
<evidence type="ECO:0000305" key="6"/>
<feature type="chain" id="PRO_0000144746" description="Claudin-5">
    <location>
        <begin position="1"/>
        <end position="218"/>
    </location>
</feature>
<feature type="topological domain" description="Cytoplasmic" evidence="2">
    <location>
        <begin position="1"/>
        <end position="7"/>
    </location>
</feature>
<feature type="transmembrane region" description="Helical" evidence="2">
    <location>
        <begin position="8"/>
        <end position="28"/>
    </location>
</feature>
<feature type="topological domain" description="Extracellular" evidence="2">
    <location>
        <begin position="29"/>
        <end position="81"/>
    </location>
</feature>
<feature type="transmembrane region" description="Helical" evidence="2">
    <location>
        <begin position="82"/>
        <end position="102"/>
    </location>
</feature>
<feature type="topological domain" description="Cytoplasmic" evidence="2">
    <location>
        <begin position="103"/>
        <end position="123"/>
    </location>
</feature>
<feature type="transmembrane region" description="Helical" evidence="2">
    <location>
        <begin position="124"/>
        <end position="144"/>
    </location>
</feature>
<feature type="topological domain" description="Extracellular" evidence="2">
    <location>
        <begin position="145"/>
        <end position="160"/>
    </location>
</feature>
<feature type="transmembrane region" description="Helical" evidence="2">
    <location>
        <begin position="161"/>
        <end position="181"/>
    </location>
</feature>
<feature type="topological domain" description="Cytoplasmic" evidence="2">
    <location>
        <begin position="182"/>
        <end position="218"/>
    </location>
</feature>
<feature type="region of interest" description="Interactions with TJP1, TJP2 and TJP3" evidence="1">
    <location>
        <begin position="217"/>
        <end position="218"/>
    </location>
</feature>
<feature type="sequence conflict" description="In Ref. 1; AAB96653." evidence="6" ref="1">
    <original>S</original>
    <variation>N</variation>
    <location>
        <position position="58"/>
    </location>
</feature>
<organism>
    <name type="scientific">Mus musculus</name>
    <name type="common">Mouse</name>
    <dbReference type="NCBI Taxonomy" id="10090"/>
    <lineage>
        <taxon>Eukaryota</taxon>
        <taxon>Metazoa</taxon>
        <taxon>Chordata</taxon>
        <taxon>Craniata</taxon>
        <taxon>Vertebrata</taxon>
        <taxon>Euteleostomi</taxon>
        <taxon>Mammalia</taxon>
        <taxon>Eutheria</taxon>
        <taxon>Euarchontoglires</taxon>
        <taxon>Glires</taxon>
        <taxon>Rodentia</taxon>
        <taxon>Myomorpha</taxon>
        <taxon>Muroidea</taxon>
        <taxon>Muridae</taxon>
        <taxon>Murinae</taxon>
        <taxon>Mus</taxon>
        <taxon>Mus</taxon>
    </lineage>
</organism>
<accession>O54942</accession>
<accession>O88789</accession>
<dbReference type="EMBL" id="AF035814">
    <property type="protein sequence ID" value="AAB96653.1"/>
    <property type="molecule type" value="mRNA"/>
</dbReference>
<dbReference type="EMBL" id="U82758">
    <property type="protein sequence ID" value="AAC27545.1"/>
    <property type="molecule type" value="mRNA"/>
</dbReference>
<dbReference type="EMBL" id="AF087823">
    <property type="protein sequence ID" value="AAD09758.1"/>
    <property type="molecule type" value="mRNA"/>
</dbReference>
<dbReference type="EMBL" id="AK077282">
    <property type="protein sequence ID" value="BAC36728.1"/>
    <property type="molecule type" value="mRNA"/>
</dbReference>
<dbReference type="EMBL" id="BC002016">
    <property type="protein sequence ID" value="AAH02016.1"/>
    <property type="molecule type" value="mRNA"/>
</dbReference>
<dbReference type="EMBL" id="BC083341">
    <property type="protein sequence ID" value="AAH83341.1"/>
    <property type="molecule type" value="mRNA"/>
</dbReference>
<dbReference type="CCDS" id="CCDS28026.1"/>
<dbReference type="RefSeq" id="NP_038833.2">
    <property type="nucleotide sequence ID" value="NM_013805.4"/>
</dbReference>
<dbReference type="SMR" id="O54942"/>
<dbReference type="FunCoup" id="O54942">
    <property type="interactions" value="267"/>
</dbReference>
<dbReference type="MINT" id="O54942"/>
<dbReference type="STRING" id="10090.ENSMUSP00000041925"/>
<dbReference type="iPTMnet" id="O54942"/>
<dbReference type="PhosphoSitePlus" id="O54942"/>
<dbReference type="SwissPalm" id="O54942"/>
<dbReference type="PaxDb" id="10090-ENSMUSP00000041925"/>
<dbReference type="ProteomicsDB" id="285490"/>
<dbReference type="ABCD" id="O54942">
    <property type="antibodies" value="1 sequenced antibody"/>
</dbReference>
<dbReference type="Antibodypedia" id="3615">
    <property type="antibodies" value="481 antibodies from 38 providers"/>
</dbReference>
<dbReference type="DNASU" id="12741"/>
<dbReference type="Ensembl" id="ENSMUST00000043577.3">
    <property type="protein sequence ID" value="ENSMUSP00000041925.2"/>
    <property type="gene ID" value="ENSMUSG00000041378.3"/>
</dbReference>
<dbReference type="GeneID" id="12741"/>
<dbReference type="KEGG" id="mmu:12741"/>
<dbReference type="UCSC" id="uc007yok.2">
    <property type="organism name" value="mouse"/>
</dbReference>
<dbReference type="AGR" id="MGI:1276112"/>
<dbReference type="CTD" id="7122"/>
<dbReference type="MGI" id="MGI:1276112">
    <property type="gene designation" value="Cldn5"/>
</dbReference>
<dbReference type="VEuPathDB" id="HostDB:ENSMUSG00000041378"/>
<dbReference type="eggNOG" id="ENOG502QW5D">
    <property type="taxonomic scope" value="Eukaryota"/>
</dbReference>
<dbReference type="GeneTree" id="ENSGT00940000161769"/>
<dbReference type="HOGENOM" id="CLU_076370_1_2_1"/>
<dbReference type="InParanoid" id="O54942"/>
<dbReference type="OMA" id="SWFANTI"/>
<dbReference type="OrthoDB" id="9423433at2759"/>
<dbReference type="PhylomeDB" id="O54942"/>
<dbReference type="TreeFam" id="TF331936"/>
<dbReference type="BioGRID-ORCS" id="12741">
    <property type="hits" value="3 hits in 78 CRISPR screens"/>
</dbReference>
<dbReference type="PRO" id="PR:O54942"/>
<dbReference type="Proteomes" id="UP000000589">
    <property type="component" value="Chromosome 16"/>
</dbReference>
<dbReference type="RNAct" id="O54942">
    <property type="molecule type" value="protein"/>
</dbReference>
<dbReference type="Bgee" id="ENSMUSG00000041378">
    <property type="expression patterns" value="Expressed in brain blood vessel and 243 other cell types or tissues"/>
</dbReference>
<dbReference type="GO" id="GO:0016327">
    <property type="term" value="C:apicolateral plasma membrane"/>
    <property type="evidence" value="ECO:0007669"/>
    <property type="project" value="Ensembl"/>
</dbReference>
<dbReference type="GO" id="GO:0005923">
    <property type="term" value="C:bicellular tight junction"/>
    <property type="evidence" value="ECO:0000314"/>
    <property type="project" value="MGI"/>
</dbReference>
<dbReference type="GO" id="GO:0005911">
    <property type="term" value="C:cell-cell junction"/>
    <property type="evidence" value="ECO:0000314"/>
    <property type="project" value="ARUK-UCL"/>
</dbReference>
<dbReference type="GO" id="GO:0030864">
    <property type="term" value="C:cortical actin cytoskeleton"/>
    <property type="evidence" value="ECO:0007669"/>
    <property type="project" value="Ensembl"/>
</dbReference>
<dbReference type="GO" id="GO:0016328">
    <property type="term" value="C:lateral plasma membrane"/>
    <property type="evidence" value="ECO:0007669"/>
    <property type="project" value="Ensembl"/>
</dbReference>
<dbReference type="GO" id="GO:0033270">
    <property type="term" value="C:paranode region of axon"/>
    <property type="evidence" value="ECO:0007669"/>
    <property type="project" value="Ensembl"/>
</dbReference>
<dbReference type="GO" id="GO:0005886">
    <property type="term" value="C:plasma membrane"/>
    <property type="evidence" value="ECO:0000314"/>
    <property type="project" value="CAFA"/>
</dbReference>
<dbReference type="GO" id="GO:0043220">
    <property type="term" value="C:Schmidt-Lanterman incisure"/>
    <property type="evidence" value="ECO:0007669"/>
    <property type="project" value="Ensembl"/>
</dbReference>
<dbReference type="GO" id="GO:0070160">
    <property type="term" value="C:tight junction"/>
    <property type="evidence" value="ECO:0000314"/>
    <property type="project" value="ARUK-UCL"/>
</dbReference>
<dbReference type="GO" id="GO:0042802">
    <property type="term" value="F:identical protein binding"/>
    <property type="evidence" value="ECO:0000250"/>
    <property type="project" value="UniProtKB"/>
</dbReference>
<dbReference type="GO" id="GO:0005198">
    <property type="term" value="F:structural molecule activity"/>
    <property type="evidence" value="ECO:0007669"/>
    <property type="project" value="InterPro"/>
</dbReference>
<dbReference type="GO" id="GO:0016338">
    <property type="term" value="P:calcium-independent cell-cell adhesion via plasma membrane cell-adhesion molecules"/>
    <property type="evidence" value="ECO:0000250"/>
    <property type="project" value="UniProtKB"/>
</dbReference>
<dbReference type="GO" id="GO:0098609">
    <property type="term" value="P:cell-cell adhesion"/>
    <property type="evidence" value="ECO:0000305"/>
    <property type="project" value="MGI"/>
</dbReference>
<dbReference type="GO" id="GO:1990963">
    <property type="term" value="P:establishment of blood-retinal barrier"/>
    <property type="evidence" value="ECO:0007669"/>
    <property type="project" value="Ensembl"/>
</dbReference>
<dbReference type="GO" id="GO:0035633">
    <property type="term" value="P:maintenance of blood-brain barrier"/>
    <property type="evidence" value="ECO:0007669"/>
    <property type="project" value="Ensembl"/>
</dbReference>
<dbReference type="GO" id="GO:0042552">
    <property type="term" value="P:myelination"/>
    <property type="evidence" value="ECO:0007669"/>
    <property type="project" value="Ensembl"/>
</dbReference>
<dbReference type="GO" id="GO:0016525">
    <property type="term" value="P:negative regulation of angiogenesis"/>
    <property type="evidence" value="ECO:0007669"/>
    <property type="project" value="Ensembl"/>
</dbReference>
<dbReference type="GO" id="GO:0030336">
    <property type="term" value="P:negative regulation of cell migration"/>
    <property type="evidence" value="ECO:0007669"/>
    <property type="project" value="Ensembl"/>
</dbReference>
<dbReference type="GO" id="GO:0010629">
    <property type="term" value="P:negative regulation of gene expression"/>
    <property type="evidence" value="ECO:0000315"/>
    <property type="project" value="ARUK-UCL"/>
</dbReference>
<dbReference type="GO" id="GO:0043116">
    <property type="term" value="P:negative regulation of vascular permeability"/>
    <property type="evidence" value="ECO:0007669"/>
    <property type="project" value="Ensembl"/>
</dbReference>
<dbReference type="GO" id="GO:1903348">
    <property type="term" value="P:positive regulation of bicellular tight junction assembly"/>
    <property type="evidence" value="ECO:0007669"/>
    <property type="project" value="Ensembl"/>
</dbReference>
<dbReference type="GO" id="GO:0008284">
    <property type="term" value="P:positive regulation of cell population proliferation"/>
    <property type="evidence" value="ECO:0007669"/>
    <property type="project" value="Ensembl"/>
</dbReference>
<dbReference type="GO" id="GO:1903142">
    <property type="term" value="P:positive regulation of establishment of endothelial barrier"/>
    <property type="evidence" value="ECO:0007669"/>
    <property type="project" value="Ensembl"/>
</dbReference>
<dbReference type="GO" id="GO:0010628">
    <property type="term" value="P:positive regulation of gene expression"/>
    <property type="evidence" value="ECO:0000315"/>
    <property type="project" value="ARUK-UCL"/>
</dbReference>
<dbReference type="GO" id="GO:0045471">
    <property type="term" value="P:response to ethanol"/>
    <property type="evidence" value="ECO:0007669"/>
    <property type="project" value="Ensembl"/>
</dbReference>
<dbReference type="GO" id="GO:0120192">
    <property type="term" value="P:tight junction assembly"/>
    <property type="evidence" value="ECO:0000315"/>
    <property type="project" value="ARUK-UCL"/>
</dbReference>
<dbReference type="GO" id="GO:0007179">
    <property type="term" value="P:transforming growth factor beta receptor signaling pathway"/>
    <property type="evidence" value="ECO:0007669"/>
    <property type="project" value="Ensembl"/>
</dbReference>
<dbReference type="FunFam" id="1.20.140.150:FF:000001">
    <property type="entry name" value="Claudin"/>
    <property type="match status" value="1"/>
</dbReference>
<dbReference type="Gene3D" id="1.20.140.150">
    <property type="match status" value="1"/>
</dbReference>
<dbReference type="InterPro" id="IPR006187">
    <property type="entry name" value="Claudin"/>
</dbReference>
<dbReference type="InterPro" id="IPR003551">
    <property type="entry name" value="Claudin5"/>
</dbReference>
<dbReference type="InterPro" id="IPR017974">
    <property type="entry name" value="Claudin_CS"/>
</dbReference>
<dbReference type="InterPro" id="IPR004031">
    <property type="entry name" value="PMP22/EMP/MP20/Claudin"/>
</dbReference>
<dbReference type="PANTHER" id="PTHR12002">
    <property type="entry name" value="CLAUDIN"/>
    <property type="match status" value="1"/>
</dbReference>
<dbReference type="Pfam" id="PF00822">
    <property type="entry name" value="PMP22_Claudin"/>
    <property type="match status" value="1"/>
</dbReference>
<dbReference type="PRINTS" id="PR01077">
    <property type="entry name" value="CLAUDIN"/>
</dbReference>
<dbReference type="PRINTS" id="PR01380">
    <property type="entry name" value="CLAUDIN5"/>
</dbReference>
<dbReference type="PROSITE" id="PS01346">
    <property type="entry name" value="CLAUDIN"/>
    <property type="match status" value="1"/>
</dbReference>
<protein>
    <recommendedName>
        <fullName>Claudin-5</fullName>
    </recommendedName>
    <alternativeName>
        <fullName>Brain endothelial cell clone 1 protein</fullName>
    </alternativeName>
    <alternativeName>
        <fullName>Lung-specific membrane protein</fullName>
    </alternativeName>
</protein>
<keyword id="KW-0965">Cell junction</keyword>
<keyword id="KW-1003">Cell membrane</keyword>
<keyword id="KW-0472">Membrane</keyword>
<keyword id="KW-1185">Reference proteome</keyword>
<keyword id="KW-0796">Tight junction</keyword>
<keyword id="KW-0812">Transmembrane</keyword>
<keyword id="KW-1133">Transmembrane helix</keyword>
<sequence length="218" mass="23054">MGSAALEILGLVLCLVGWVGLILACGLPMWQVTAFLDHNIVTAQTTWKGLWMSCVVQSTGHMQCKVYESVLALSAEVQAARALTVGAVLLALVALFVTLTGAQCTTCVAPGPVKARVALTGGALYAVCGLLALVPLCWFANIVVREFYDPTVPVSQKYELGAALYIGWAASALLMCGGGLVCCGAWVCTGRPEFSFPVKYSAPRRPTANGDYDKKNYV</sequence>
<reference key="1">
    <citation type="journal article" date="1998" name="Lab. Invest.">
        <title>Brain capillary endothelial cells express MBEC1, a protein that is related to the Clostridium perfringens enterotoxin receptors.</title>
        <authorList>
            <person name="Chen Z."/>
            <person name="Zandonatti M."/>
            <person name="Jakubowski D."/>
            <person name="Fox H.S."/>
        </authorList>
    </citation>
    <scope>NUCLEOTIDE SEQUENCE [MRNA]</scope>
    <source>
        <tissue>Brain</tissue>
    </source>
</reference>
<reference key="2">
    <citation type="submission" date="1996-12" db="EMBL/GenBank/DDBJ databases">
        <title>A mouse lung-specific membrane protein.</title>
        <authorList>
            <person name="Kim K.K."/>
            <person name="Baek D.H."/>
            <person name="Kwon B.S."/>
        </authorList>
    </citation>
    <scope>NUCLEOTIDE SEQUENCE [MRNA]</scope>
</reference>
<reference key="3">
    <citation type="journal article" date="1999" name="Proc. Natl. Acad. Sci. U.S.A.">
        <title>Claudin multigene family encoding four-transmembrane domain protein components of tight junction strands.</title>
        <authorList>
            <person name="Morita K."/>
            <person name="Furuse M."/>
            <person name="Fujimoto K."/>
            <person name="Tsukita S."/>
        </authorList>
    </citation>
    <scope>NUCLEOTIDE SEQUENCE [MRNA]</scope>
    <scope>SUBCELLULAR LOCATION</scope>
    <scope>TISSUE SPECIFICITY</scope>
</reference>
<reference key="4">
    <citation type="journal article" date="2005" name="Science">
        <title>The transcriptional landscape of the mammalian genome.</title>
        <authorList>
            <person name="Carninci P."/>
            <person name="Kasukawa T."/>
            <person name="Katayama S."/>
            <person name="Gough J."/>
            <person name="Frith M.C."/>
            <person name="Maeda N."/>
            <person name="Oyama R."/>
            <person name="Ravasi T."/>
            <person name="Lenhard B."/>
            <person name="Wells C."/>
            <person name="Kodzius R."/>
            <person name="Shimokawa K."/>
            <person name="Bajic V.B."/>
            <person name="Brenner S.E."/>
            <person name="Batalov S."/>
            <person name="Forrest A.R."/>
            <person name="Zavolan M."/>
            <person name="Davis M.J."/>
            <person name="Wilming L.G."/>
            <person name="Aidinis V."/>
            <person name="Allen J.E."/>
            <person name="Ambesi-Impiombato A."/>
            <person name="Apweiler R."/>
            <person name="Aturaliya R.N."/>
            <person name="Bailey T.L."/>
            <person name="Bansal M."/>
            <person name="Baxter L."/>
            <person name="Beisel K.W."/>
            <person name="Bersano T."/>
            <person name="Bono H."/>
            <person name="Chalk A.M."/>
            <person name="Chiu K.P."/>
            <person name="Choudhary V."/>
            <person name="Christoffels A."/>
            <person name="Clutterbuck D.R."/>
            <person name="Crowe M.L."/>
            <person name="Dalla E."/>
            <person name="Dalrymple B.P."/>
            <person name="de Bono B."/>
            <person name="Della Gatta G."/>
            <person name="di Bernardo D."/>
            <person name="Down T."/>
            <person name="Engstrom P."/>
            <person name="Fagiolini M."/>
            <person name="Faulkner G."/>
            <person name="Fletcher C.F."/>
            <person name="Fukushima T."/>
            <person name="Furuno M."/>
            <person name="Futaki S."/>
            <person name="Gariboldi M."/>
            <person name="Georgii-Hemming P."/>
            <person name="Gingeras T.R."/>
            <person name="Gojobori T."/>
            <person name="Green R.E."/>
            <person name="Gustincich S."/>
            <person name="Harbers M."/>
            <person name="Hayashi Y."/>
            <person name="Hensch T.K."/>
            <person name="Hirokawa N."/>
            <person name="Hill D."/>
            <person name="Huminiecki L."/>
            <person name="Iacono M."/>
            <person name="Ikeo K."/>
            <person name="Iwama A."/>
            <person name="Ishikawa T."/>
            <person name="Jakt M."/>
            <person name="Kanapin A."/>
            <person name="Katoh M."/>
            <person name="Kawasawa Y."/>
            <person name="Kelso J."/>
            <person name="Kitamura H."/>
            <person name="Kitano H."/>
            <person name="Kollias G."/>
            <person name="Krishnan S.P."/>
            <person name="Kruger A."/>
            <person name="Kummerfeld S.K."/>
            <person name="Kurochkin I.V."/>
            <person name="Lareau L.F."/>
            <person name="Lazarevic D."/>
            <person name="Lipovich L."/>
            <person name="Liu J."/>
            <person name="Liuni S."/>
            <person name="McWilliam S."/>
            <person name="Madan Babu M."/>
            <person name="Madera M."/>
            <person name="Marchionni L."/>
            <person name="Matsuda H."/>
            <person name="Matsuzawa S."/>
            <person name="Miki H."/>
            <person name="Mignone F."/>
            <person name="Miyake S."/>
            <person name="Morris K."/>
            <person name="Mottagui-Tabar S."/>
            <person name="Mulder N."/>
            <person name="Nakano N."/>
            <person name="Nakauchi H."/>
            <person name="Ng P."/>
            <person name="Nilsson R."/>
            <person name="Nishiguchi S."/>
            <person name="Nishikawa S."/>
            <person name="Nori F."/>
            <person name="Ohara O."/>
            <person name="Okazaki Y."/>
            <person name="Orlando V."/>
            <person name="Pang K.C."/>
            <person name="Pavan W.J."/>
            <person name="Pavesi G."/>
            <person name="Pesole G."/>
            <person name="Petrovsky N."/>
            <person name="Piazza S."/>
            <person name="Reed J."/>
            <person name="Reid J.F."/>
            <person name="Ring B.Z."/>
            <person name="Ringwald M."/>
            <person name="Rost B."/>
            <person name="Ruan Y."/>
            <person name="Salzberg S.L."/>
            <person name="Sandelin A."/>
            <person name="Schneider C."/>
            <person name="Schoenbach C."/>
            <person name="Sekiguchi K."/>
            <person name="Semple C.A."/>
            <person name="Seno S."/>
            <person name="Sessa L."/>
            <person name="Sheng Y."/>
            <person name="Shibata Y."/>
            <person name="Shimada H."/>
            <person name="Shimada K."/>
            <person name="Silva D."/>
            <person name="Sinclair B."/>
            <person name="Sperling S."/>
            <person name="Stupka E."/>
            <person name="Sugiura K."/>
            <person name="Sultana R."/>
            <person name="Takenaka Y."/>
            <person name="Taki K."/>
            <person name="Tammoja K."/>
            <person name="Tan S.L."/>
            <person name="Tang S."/>
            <person name="Taylor M.S."/>
            <person name="Tegner J."/>
            <person name="Teichmann S.A."/>
            <person name="Ueda H.R."/>
            <person name="van Nimwegen E."/>
            <person name="Verardo R."/>
            <person name="Wei C.L."/>
            <person name="Yagi K."/>
            <person name="Yamanishi H."/>
            <person name="Zabarovsky E."/>
            <person name="Zhu S."/>
            <person name="Zimmer A."/>
            <person name="Hide W."/>
            <person name="Bult C."/>
            <person name="Grimmond S.M."/>
            <person name="Teasdale R.D."/>
            <person name="Liu E.T."/>
            <person name="Brusic V."/>
            <person name="Quackenbush J."/>
            <person name="Wahlestedt C."/>
            <person name="Mattick J.S."/>
            <person name="Hume D.A."/>
            <person name="Kai C."/>
            <person name="Sasaki D."/>
            <person name="Tomaru Y."/>
            <person name="Fukuda S."/>
            <person name="Kanamori-Katayama M."/>
            <person name="Suzuki M."/>
            <person name="Aoki J."/>
            <person name="Arakawa T."/>
            <person name="Iida J."/>
            <person name="Imamura K."/>
            <person name="Itoh M."/>
            <person name="Kato T."/>
            <person name="Kawaji H."/>
            <person name="Kawagashira N."/>
            <person name="Kawashima T."/>
            <person name="Kojima M."/>
            <person name="Kondo S."/>
            <person name="Konno H."/>
            <person name="Nakano K."/>
            <person name="Ninomiya N."/>
            <person name="Nishio T."/>
            <person name="Okada M."/>
            <person name="Plessy C."/>
            <person name="Shibata K."/>
            <person name="Shiraki T."/>
            <person name="Suzuki S."/>
            <person name="Tagami M."/>
            <person name="Waki K."/>
            <person name="Watahiki A."/>
            <person name="Okamura-Oho Y."/>
            <person name="Suzuki H."/>
            <person name="Kawai J."/>
            <person name="Hayashizaki Y."/>
        </authorList>
    </citation>
    <scope>NUCLEOTIDE SEQUENCE [LARGE SCALE MRNA]</scope>
    <source>
        <strain>C57BL/6J</strain>
        <tissue>Ovary</tissue>
        <tissue>Uterus</tissue>
    </source>
</reference>
<reference key="5">
    <citation type="journal article" date="2004" name="Genome Res.">
        <title>The status, quality, and expansion of the NIH full-length cDNA project: the Mammalian Gene Collection (MGC).</title>
        <authorList>
            <consortium name="The MGC Project Team"/>
        </authorList>
    </citation>
    <scope>NUCLEOTIDE SEQUENCE [LARGE SCALE MRNA]</scope>
    <source>
        <strain>C57BL/6J</strain>
        <tissue>Brain</tissue>
        <tissue>Mammary tumor</tissue>
    </source>
</reference>
<reference key="6">
    <citation type="journal article" date="1999" name="J. Cell Biol.">
        <title>Direct binding of three tight junction-associated MAGUKs, ZO-1, ZO-2, and ZO-3, with the COOH termini of claudins.</title>
        <authorList>
            <person name="Itoh M."/>
            <person name="Furuse M."/>
            <person name="Morita K."/>
            <person name="Kubota K."/>
            <person name="Saitou M."/>
            <person name="Tsukita S."/>
        </authorList>
    </citation>
    <scope>INTERACTION WITH TJP1; TJP2 AND TJP3</scope>
</reference>
<reference key="7">
    <citation type="journal article" date="2010" name="Cell">
        <title>A tissue-specific atlas of mouse protein phosphorylation and expression.</title>
        <authorList>
            <person name="Huttlin E.L."/>
            <person name="Jedrychowski M.P."/>
            <person name="Elias J.E."/>
            <person name="Goswami T."/>
            <person name="Rad R."/>
            <person name="Beausoleil S.A."/>
            <person name="Villen J."/>
            <person name="Haas W."/>
            <person name="Sowa M.E."/>
            <person name="Gygi S.P."/>
        </authorList>
    </citation>
    <scope>IDENTIFICATION BY MASS SPECTROMETRY [LARGE SCALE ANALYSIS]</scope>
    <source>
        <tissue>Lung</tissue>
    </source>
</reference>
<reference key="8">
    <citation type="journal article" date="2019" name="Cell. Mol. Life Sci.">
        <title>Tight junction proteins at the blood-brain barrier: far more than claudin-5.</title>
        <authorList>
            <person name="Berndt P."/>
            <person name="Winkler L."/>
            <person name="Cording J."/>
            <person name="Breitkreuz-Korff O."/>
            <person name="Rex A."/>
            <person name="Dithmer S."/>
            <person name="Rausch V."/>
            <person name="Blasig R."/>
            <person name="Richter M."/>
            <person name="Sporbert A."/>
            <person name="Wolburg H."/>
            <person name="Blasig I.E."/>
            <person name="Haseloff R.F."/>
        </authorList>
    </citation>
    <scope>SUBCELLULAR LOCATION</scope>
</reference>
<name>CLD5_MOUSE</name>
<proteinExistence type="evidence at protein level"/>
<comment type="function">
    <text evidence="1">Plays a major role in tight junction-specific obliteration of the intercellular space, through calcium-independent cell-adhesion activity.</text>
</comment>
<comment type="subunit">
    <text evidence="1 3">Interacts with MPDZ (By similarity). Directly interacts with TJP1/ZO-1, TJP2/ZO-2 and TJP3/ZO-3.</text>
</comment>
<comment type="subcellular location">
    <subcellularLocation>
        <location evidence="4 5">Cell junction</location>
        <location evidence="4 5">Tight junction</location>
    </subcellularLocation>
    <subcellularLocation>
        <location evidence="5">Cell membrane</location>
        <topology evidence="2">Multi-pass membrane protein</topology>
    </subcellularLocation>
</comment>
<comment type="tissue specificity">
    <text evidence="5">Widely expressed with highest levels in the lung.</text>
</comment>
<comment type="similarity">
    <text evidence="6">Belongs to the claudin family.</text>
</comment>
<gene>
    <name type="primary">Cldn5</name>
    <name type="synonym">Bec1</name>
</gene>